<proteinExistence type="evidence at protein level"/>
<comment type="function">
    <text evidence="2 4">This is the catalytic component of the active enzyme, which catalyzes the hydrolysis of ATP coupled with the exchange of sodium and potassium ions across the plasma membrane. This action creates the electrochemical gradient of sodium and potassium ions, providing the energy for active transport of various nutrients (By similarity). Could also be part of an osmosensory signaling pathway that senses body-fluid sodium levels and controls salt intake behavior as well as voluntary water intake to regulate sodium homeostasis (By similarity).</text>
</comment>
<comment type="catalytic activity">
    <reaction>
        <text>K(+)(out) + Na(+)(in) + ATP + H2O = K(+)(in) + Na(+)(out) + ADP + phosphate + H(+)</text>
        <dbReference type="Rhea" id="RHEA:18353"/>
        <dbReference type="ChEBI" id="CHEBI:15377"/>
        <dbReference type="ChEBI" id="CHEBI:15378"/>
        <dbReference type="ChEBI" id="CHEBI:29101"/>
        <dbReference type="ChEBI" id="CHEBI:29103"/>
        <dbReference type="ChEBI" id="CHEBI:30616"/>
        <dbReference type="ChEBI" id="CHEBI:43474"/>
        <dbReference type="ChEBI" id="CHEBI:456216"/>
        <dbReference type="EC" id="7.2.2.13"/>
    </reaction>
</comment>
<comment type="subunit">
    <text evidence="2 3 4 8">The sodium/potassium-transporting ATPase is composed of a catalytic alpha subunit, an auxiliary non-catalytic beta subunit and an additional regulatory subunit. Interacts with regulatory subunit FXYD1 (PubMed:12657675). Interacts with regulatory subunit FXYD3 (By similarity). Interacts with SIK1 (By similarity). Interacts with SLC35G1 and STIM1 (By similarity). Interacts with CLN3; this interaction regulates the sodium/potassium-transporting ATPase complex localization at the plasma membrane (By similarity). Interacts with SCN7A; activates ATP1A1 P-type sodium:potassium-exchanging transporter activity which indirectly signals to nearby neurons to regulate sodium homeostasis (By similarity).</text>
</comment>
<comment type="subcellular location">
    <subcellularLocation>
        <location evidence="4">Cell membrane</location>
        <topology evidence="5">Multi-pass membrane protein</topology>
    </subcellularLocation>
    <subcellularLocation>
        <location evidence="3">Basolateral cell membrane</location>
        <topology evidence="5">Multi-pass membrane protein</topology>
    </subcellularLocation>
    <subcellularLocation>
        <location evidence="7">Cell membrane</location>
        <location evidence="7">Sarcolemma</location>
        <topology evidence="5">Multi-pass membrane protein</topology>
    </subcellularLocation>
    <subcellularLocation>
        <location evidence="3">Cell projection</location>
        <location evidence="3">Axon</location>
    </subcellularLocation>
    <subcellularLocation>
        <location evidence="2">Melanosome</location>
    </subcellularLocation>
</comment>
<comment type="PTM">
    <text evidence="1">Phosphorylation on Tyr-10 modulates pumping activity. Phosphorylation of Ser-941 by PKA modulates the response of ATP1A1 to PKC. Dephosphorylation by protein phosphatase 2A (PP2A) following increases in intracellular sodium, leading to increase catalytic activity (By similarity).</text>
</comment>
<comment type="similarity">
    <text evidence="9">Belongs to the cation transport ATPase (P-type) (TC 3.A.3) family. Type IIC subfamily.</text>
</comment>
<sequence>MGKGVGRDKYEPAAVSEHGDKKKAKKERDMDELKKEVSMDDHKLSLDELHRKYGTDLSRGLTTARAAEILARDGPNALTPPPTTPEWVKFCRQLFGGFSMLLWIGAVLCFLAYGIQAATEEEPQNDNLYLGVVLSAVVIITGCFSYYQEAKSSKIMESFKNMVPQQALVIRNGEKMSINAEEVVVGDLVEVKGGDRIPADLRIISANGCKVDNSSLTGESEPQTRSPDFTNENPLETRNIAFFSTNCVEGTARGIVVYTGDRTVMGRIATLASGLEGGQTPIAAEIEHFIHIITGVAVFLGVSFFILSLILEYTWLEAVIFLIGIIVANVPEGLLATVTVCLTLTAKRMARKNCLVKNLEAVETLGSTSTICSDKTGTLTQNRMTVAHMWFDNQIHEADTTENQSGVSFDKTSATWLALSRIAGLCNRAVFQANQDNLPILKRAVAGDASESALLKCIEVCCGSVKEMRERYTKIVEIPFNSTNKYQLSIHKNANAGEPRHLLVMKGAPERILDRCSSILIHGKEQPLDEELKDAFQNAYLELGGLGERVLGFCHLLLPDEQFPEGFQFDTDDVNFPVDNLCFVGLISMIDPPRAAVPDAVGKCRSAGIKVIMVTGDHPITAKAIAKGVGIISEGNETVEDIAARLNIPVSQVNPRDARACVVHGSDLKDMTPEQLDDILKYHTEIVFARTSPQQKLIIVEGCQRQGAIVAVTGDGVNDSPALKKADIGVAMGIAGSDVSKQAADMILLDDNFASIVTGVEEGRLIFDNLKKSIAYTLTSNIPEITPFLIFIIANIPLPLGTVTILCIDLGTDMVPAISLAYEQAESDIMKRQPRNPQTDKLVNERLISMAYGQIGMIQALGGFFTYFVIMAENGFLPNHLLGIRVTWDDRWINDVEDSYGQQWTYEQRKIVEFTCHTAFFVSIVVVQWADLVICKTRRNSVFQQGMKNKILIFGLFEETALAAFLSYCPGMGVALRMYPLKPTWWFCAFPYSLLIFVYDEVRKLIIRRRPGGWVEKETYY</sequence>
<protein>
    <recommendedName>
        <fullName>Sodium/potassium-transporting ATPase subunit alpha-1</fullName>
        <shortName>Na(+)/K(+) ATPase alpha-1 subunit</shortName>
        <ecNumber>7.2.2.13</ecNumber>
    </recommendedName>
    <alternativeName>
        <fullName>Sodium pump subunit alpha-1</fullName>
    </alternativeName>
</protein>
<reference key="1">
    <citation type="submission" date="2006-09" db="EMBL/GenBank/DDBJ databases">
        <authorList>
            <consortium name="NIH - Mammalian Gene Collection (MGC) project"/>
        </authorList>
    </citation>
    <scope>NUCLEOTIDE SEQUENCE [LARGE SCALE MRNA]</scope>
    <source>
        <strain>Hereford</strain>
        <tissue>Basal ganglia</tissue>
    </source>
</reference>
<reference key="2">
    <citation type="journal article" date="2002" name="Proc. Natl. Acad. Sci. U.S.A.">
        <title>Phospholemman (FXYD1) associates with Na,K-ATPase and regulates its transport properties.</title>
        <authorList>
            <person name="Crambert G."/>
            <person name="Fuzesi M."/>
            <person name="Garty H."/>
            <person name="Karlish S."/>
            <person name="Geering K."/>
        </authorList>
    </citation>
    <scope>SUBCELLULAR LOCATION</scope>
</reference>
<reference key="3">
    <citation type="journal article" date="2003" name="J. Neurosci.">
        <title>Phospholemman, a single-span membrane protein, is an accessory protein of Na,K-ATPase in cerebellum and choroid plexus.</title>
        <authorList>
            <person name="Feschenko M.S."/>
            <person name="Donnet C."/>
            <person name="Wetzel R.K."/>
            <person name="Asinovski N.K."/>
            <person name="Jones L.R."/>
            <person name="Sweadner K.J."/>
        </authorList>
    </citation>
    <scope>INTERACTION WITH FXYD1</scope>
</reference>
<keyword id="KW-0002">3D-structure</keyword>
<keyword id="KW-0007">Acetylation</keyword>
<keyword id="KW-0067">ATP-binding</keyword>
<keyword id="KW-1003">Cell membrane</keyword>
<keyword id="KW-0966">Cell projection</keyword>
<keyword id="KW-0406">Ion transport</keyword>
<keyword id="KW-0460">Magnesium</keyword>
<keyword id="KW-0472">Membrane</keyword>
<keyword id="KW-0479">Metal-binding</keyword>
<keyword id="KW-0547">Nucleotide-binding</keyword>
<keyword id="KW-0597">Phosphoprotein</keyword>
<keyword id="KW-0630">Potassium</keyword>
<keyword id="KW-0633">Potassium transport</keyword>
<keyword id="KW-1185">Reference proteome</keyword>
<keyword id="KW-0915">Sodium</keyword>
<keyword id="KW-0739">Sodium transport</keyword>
<keyword id="KW-0740">Sodium/potassium transport</keyword>
<keyword id="KW-1278">Translocase</keyword>
<keyword id="KW-0812">Transmembrane</keyword>
<keyword id="KW-1133">Transmembrane helix</keyword>
<keyword id="KW-0813">Transport</keyword>
<feature type="propeptide" id="PRO_0000305975" evidence="1">
    <location>
        <begin position="1"/>
        <end position="5"/>
    </location>
</feature>
<feature type="chain" id="PRO_0000305976" description="Sodium/potassium-transporting ATPase subunit alpha-1" evidence="1">
    <location>
        <begin position="6"/>
        <end position="1021"/>
    </location>
</feature>
<feature type="topological domain" description="Cytoplasmic" evidence="5">
    <location>
        <begin position="6"/>
        <end position="85"/>
    </location>
</feature>
<feature type="transmembrane region" description="Helical" evidence="5">
    <location>
        <begin position="86"/>
        <end position="106"/>
    </location>
</feature>
<feature type="topological domain" description="Extracellular" evidence="5">
    <location>
        <begin position="107"/>
        <end position="129"/>
    </location>
</feature>
<feature type="transmembrane region" description="Helical" evidence="5">
    <location>
        <begin position="130"/>
        <end position="150"/>
    </location>
</feature>
<feature type="topological domain" description="Cytoplasmic" evidence="5">
    <location>
        <begin position="151"/>
        <end position="286"/>
    </location>
</feature>
<feature type="transmembrane region" description="Helical" evidence="5">
    <location>
        <begin position="287"/>
        <end position="306"/>
    </location>
</feature>
<feature type="topological domain" description="Extracellular" evidence="5">
    <location>
        <begin position="307"/>
        <end position="318"/>
    </location>
</feature>
<feature type="transmembrane region" description="Helical" evidence="5">
    <location>
        <begin position="319"/>
        <end position="336"/>
    </location>
</feature>
<feature type="topological domain" description="Cytoplasmic" evidence="5">
    <location>
        <begin position="337"/>
        <end position="770"/>
    </location>
</feature>
<feature type="transmembrane region" description="Helical" evidence="5">
    <location>
        <begin position="771"/>
        <end position="790"/>
    </location>
</feature>
<feature type="topological domain" description="Extracellular" evidence="5">
    <location>
        <begin position="791"/>
        <end position="800"/>
    </location>
</feature>
<feature type="transmembrane region" description="Helical" evidence="5">
    <location>
        <begin position="801"/>
        <end position="821"/>
    </location>
</feature>
<feature type="topological domain" description="Cytoplasmic" evidence="5">
    <location>
        <begin position="822"/>
        <end position="841"/>
    </location>
</feature>
<feature type="transmembrane region" description="Helical" evidence="5">
    <location>
        <begin position="842"/>
        <end position="864"/>
    </location>
</feature>
<feature type="topological domain" description="Extracellular" evidence="5">
    <location>
        <begin position="865"/>
        <end position="916"/>
    </location>
</feature>
<feature type="transmembrane region" description="Helical" evidence="5">
    <location>
        <begin position="917"/>
        <end position="936"/>
    </location>
</feature>
<feature type="topological domain" description="Cytoplasmic" evidence="5">
    <location>
        <begin position="937"/>
        <end position="949"/>
    </location>
</feature>
<feature type="transmembrane region" description="Helical" evidence="5">
    <location>
        <begin position="950"/>
        <end position="968"/>
    </location>
</feature>
<feature type="topological domain" description="Extracellular" evidence="5">
    <location>
        <begin position="969"/>
        <end position="983"/>
    </location>
</feature>
<feature type="transmembrane region" description="Helical" evidence="5">
    <location>
        <begin position="984"/>
        <end position="1004"/>
    </location>
</feature>
<feature type="topological domain" description="Cytoplasmic" evidence="5">
    <location>
        <begin position="1005"/>
        <end position="1021"/>
    </location>
</feature>
<feature type="region of interest" description="Disordered" evidence="6">
    <location>
        <begin position="1"/>
        <end position="36"/>
    </location>
</feature>
<feature type="region of interest" description="Phosphoinositide-3 kinase binding" evidence="1">
    <location>
        <begin position="80"/>
        <end position="82"/>
    </location>
</feature>
<feature type="region of interest" description="Mediates interaction with SCN7A" evidence="4">
    <location>
        <begin position="594"/>
        <end position="715"/>
    </location>
</feature>
<feature type="compositionally biased region" description="Basic and acidic residues" evidence="6">
    <location>
        <begin position="1"/>
        <end position="11"/>
    </location>
</feature>
<feature type="compositionally biased region" description="Basic and acidic residues" evidence="6">
    <location>
        <begin position="26"/>
        <end position="36"/>
    </location>
</feature>
<feature type="active site" description="4-aspartylphosphate intermediate" evidence="1">
    <location>
        <position position="374"/>
    </location>
</feature>
<feature type="binding site" evidence="1">
    <location>
        <position position="485"/>
    </location>
    <ligand>
        <name>ATP</name>
        <dbReference type="ChEBI" id="CHEBI:30616"/>
    </ligand>
</feature>
<feature type="binding site" evidence="1">
    <location>
        <position position="715"/>
    </location>
    <ligand>
        <name>Mg(2+)</name>
        <dbReference type="ChEBI" id="CHEBI:18420"/>
    </ligand>
</feature>
<feature type="binding site" evidence="1">
    <location>
        <position position="719"/>
    </location>
    <ligand>
        <name>Mg(2+)</name>
        <dbReference type="ChEBI" id="CHEBI:18420"/>
    </ligand>
</feature>
<feature type="modified residue" description="N6-acetyllysine" evidence="4">
    <location>
        <position position="9"/>
    </location>
</feature>
<feature type="modified residue" description="Phosphotyrosine" evidence="3">
    <location>
        <position position="10"/>
    </location>
</feature>
<feature type="modified residue" description="Phosphoserine; by PKC" evidence="3">
    <location>
        <position position="16"/>
    </location>
</feature>
<feature type="modified residue" description="N6-acetyllysine" evidence="4">
    <location>
        <position position="21"/>
    </location>
</feature>
<feature type="modified residue" description="Phosphoserine" evidence="3">
    <location>
        <position position="38"/>
    </location>
</feature>
<feature type="modified residue" description="Phosphoserine" evidence="3">
    <location>
        <position position="45"/>
    </location>
</feature>
<feature type="modified residue" description="Phosphoserine" evidence="4">
    <location>
        <position position="226"/>
    </location>
</feature>
<feature type="modified residue" description="Phosphotyrosine" evidence="4">
    <location>
        <position position="258"/>
    </location>
</feature>
<feature type="modified residue" description="Phosphoserine" evidence="3">
    <location>
        <position position="450"/>
    </location>
</feature>
<feature type="modified residue" description="Phosphoserine" evidence="3">
    <location>
        <position position="482"/>
    </location>
</feature>
<feature type="modified residue" description="Phosphotyrosine" evidence="2">
    <location>
        <position position="540"/>
    </location>
</feature>
<feature type="modified residue" description="Phosphoserine" evidence="4">
    <location>
        <position position="666"/>
    </location>
</feature>
<feature type="modified residue" description="Phosphoserine; by PKA" evidence="3">
    <location>
        <position position="941"/>
    </location>
</feature>
<gene>
    <name type="primary">ATP1A1</name>
</gene>
<evidence type="ECO:0000250" key="1"/>
<evidence type="ECO:0000250" key="2">
    <source>
        <dbReference type="UniProtKB" id="P05023"/>
    </source>
</evidence>
<evidence type="ECO:0000250" key="3">
    <source>
        <dbReference type="UniProtKB" id="P06685"/>
    </source>
</evidence>
<evidence type="ECO:0000250" key="4">
    <source>
        <dbReference type="UniProtKB" id="Q8VDN2"/>
    </source>
</evidence>
<evidence type="ECO:0000255" key="5"/>
<evidence type="ECO:0000256" key="6">
    <source>
        <dbReference type="SAM" id="MobiDB-lite"/>
    </source>
</evidence>
<evidence type="ECO:0000269" key="7">
    <source>
    </source>
</evidence>
<evidence type="ECO:0000269" key="8">
    <source>
    </source>
</evidence>
<evidence type="ECO:0000305" key="9"/>
<organism>
    <name type="scientific">Bos taurus</name>
    <name type="common">Bovine</name>
    <dbReference type="NCBI Taxonomy" id="9913"/>
    <lineage>
        <taxon>Eukaryota</taxon>
        <taxon>Metazoa</taxon>
        <taxon>Chordata</taxon>
        <taxon>Craniata</taxon>
        <taxon>Vertebrata</taxon>
        <taxon>Euteleostomi</taxon>
        <taxon>Mammalia</taxon>
        <taxon>Eutheria</taxon>
        <taxon>Laurasiatheria</taxon>
        <taxon>Artiodactyla</taxon>
        <taxon>Ruminantia</taxon>
        <taxon>Pecora</taxon>
        <taxon>Bovidae</taxon>
        <taxon>Bovinae</taxon>
        <taxon>Bos</taxon>
    </lineage>
</organism>
<dbReference type="EC" id="7.2.2.13"/>
<dbReference type="EMBL" id="BC123864">
    <property type="protein sequence ID" value="AAI23865.1"/>
    <property type="molecule type" value="mRNA"/>
</dbReference>
<dbReference type="RefSeq" id="NP_001070266.1">
    <property type="nucleotide sequence ID" value="NM_001076798.1"/>
</dbReference>
<dbReference type="PDB" id="4XE5">
    <property type="method" value="X-ray"/>
    <property type="resolution" value="3.90 A"/>
    <property type="chains" value="A=1-1021"/>
</dbReference>
<dbReference type="PDBsum" id="4XE5"/>
<dbReference type="SMR" id="Q08DA1"/>
<dbReference type="FunCoup" id="Q08DA1">
    <property type="interactions" value="1380"/>
</dbReference>
<dbReference type="STRING" id="9913.ENSBTAP00000060814"/>
<dbReference type="SwissPalm" id="Q08DA1"/>
<dbReference type="PaxDb" id="9913-ENSBTAP00000001646"/>
<dbReference type="PeptideAtlas" id="Q08DA1"/>
<dbReference type="Ensembl" id="ENSBTAT00000085581.2">
    <property type="protein sequence ID" value="ENSBTAP00000074408.1"/>
    <property type="gene ID" value="ENSBTAG00000001246.7"/>
</dbReference>
<dbReference type="GeneID" id="282144"/>
<dbReference type="KEGG" id="bta:282144"/>
<dbReference type="CTD" id="476"/>
<dbReference type="VEuPathDB" id="HostDB:ENSBTAG00000001246"/>
<dbReference type="VGNC" id="VGNC:26282">
    <property type="gene designation" value="ATP1A1"/>
</dbReference>
<dbReference type="eggNOG" id="KOG0203">
    <property type="taxonomic scope" value="Eukaryota"/>
</dbReference>
<dbReference type="GeneTree" id="ENSGT00940000154840"/>
<dbReference type="InParanoid" id="Q08DA1"/>
<dbReference type="OMA" id="QQPPIFN"/>
<dbReference type="OrthoDB" id="3352408at2759"/>
<dbReference type="BRENDA" id="7.2.2.13">
    <property type="organism ID" value="908"/>
</dbReference>
<dbReference type="Reactome" id="R-BTA-5578775">
    <property type="pathway name" value="Ion homeostasis"/>
</dbReference>
<dbReference type="Reactome" id="R-BTA-936837">
    <property type="pathway name" value="Ion transport by P-type ATPases"/>
</dbReference>
<dbReference type="Proteomes" id="UP000009136">
    <property type="component" value="Chromosome 3"/>
</dbReference>
<dbReference type="Bgee" id="ENSBTAG00000001246">
    <property type="expression patterns" value="Expressed in metanephros cortex and 103 other cell types or tissues"/>
</dbReference>
<dbReference type="GO" id="GO:0030424">
    <property type="term" value="C:axon"/>
    <property type="evidence" value="ECO:0007669"/>
    <property type="project" value="UniProtKB-SubCell"/>
</dbReference>
<dbReference type="GO" id="GO:0016323">
    <property type="term" value="C:basolateral plasma membrane"/>
    <property type="evidence" value="ECO:0000250"/>
    <property type="project" value="UniProtKB"/>
</dbReference>
<dbReference type="GO" id="GO:0042470">
    <property type="term" value="C:melanosome"/>
    <property type="evidence" value="ECO:0007669"/>
    <property type="project" value="UniProtKB-SubCell"/>
</dbReference>
<dbReference type="GO" id="GO:0045121">
    <property type="term" value="C:membrane raft"/>
    <property type="evidence" value="ECO:0000314"/>
    <property type="project" value="ARUK-UCL"/>
</dbReference>
<dbReference type="GO" id="GO:0005886">
    <property type="term" value="C:plasma membrane"/>
    <property type="evidence" value="ECO:0000250"/>
    <property type="project" value="UniProtKB"/>
</dbReference>
<dbReference type="GO" id="GO:0042383">
    <property type="term" value="C:sarcolemma"/>
    <property type="evidence" value="ECO:0000318"/>
    <property type="project" value="GO_Central"/>
</dbReference>
<dbReference type="GO" id="GO:0005890">
    <property type="term" value="C:sodium:potassium-exchanging ATPase complex"/>
    <property type="evidence" value="ECO:0000318"/>
    <property type="project" value="GO_Central"/>
</dbReference>
<dbReference type="GO" id="GO:0005524">
    <property type="term" value="F:ATP binding"/>
    <property type="evidence" value="ECO:0007669"/>
    <property type="project" value="UniProtKB-KW"/>
</dbReference>
<dbReference type="GO" id="GO:0016887">
    <property type="term" value="F:ATP hydrolysis activity"/>
    <property type="evidence" value="ECO:0007669"/>
    <property type="project" value="InterPro"/>
</dbReference>
<dbReference type="GO" id="GO:0046872">
    <property type="term" value="F:metal ion binding"/>
    <property type="evidence" value="ECO:0007669"/>
    <property type="project" value="UniProtKB-KW"/>
</dbReference>
<dbReference type="GO" id="GO:0005391">
    <property type="term" value="F:P-type sodium:potassium-exchanging transporter activity"/>
    <property type="evidence" value="ECO:0000250"/>
    <property type="project" value="UniProtKB"/>
</dbReference>
<dbReference type="GO" id="GO:0030007">
    <property type="term" value="P:intracellular potassium ion homeostasis"/>
    <property type="evidence" value="ECO:0000318"/>
    <property type="project" value="GO_Central"/>
</dbReference>
<dbReference type="GO" id="GO:0006883">
    <property type="term" value="P:intracellular sodium ion homeostasis"/>
    <property type="evidence" value="ECO:0000318"/>
    <property type="project" value="GO_Central"/>
</dbReference>
<dbReference type="GO" id="GO:1990573">
    <property type="term" value="P:potassium ion import across plasma membrane"/>
    <property type="evidence" value="ECO:0000318"/>
    <property type="project" value="GO_Central"/>
</dbReference>
<dbReference type="GO" id="GO:1902600">
    <property type="term" value="P:proton transmembrane transport"/>
    <property type="evidence" value="ECO:0000318"/>
    <property type="project" value="GO_Central"/>
</dbReference>
<dbReference type="GO" id="GO:0002028">
    <property type="term" value="P:regulation of sodium ion transport"/>
    <property type="evidence" value="ECO:0000250"/>
    <property type="project" value="UniProtKB"/>
</dbReference>
<dbReference type="GO" id="GO:0036376">
    <property type="term" value="P:sodium ion export across plasma membrane"/>
    <property type="evidence" value="ECO:0000318"/>
    <property type="project" value="GO_Central"/>
</dbReference>
<dbReference type="CDD" id="cd02608">
    <property type="entry name" value="P-type_ATPase_Na-K_like"/>
    <property type="match status" value="1"/>
</dbReference>
<dbReference type="FunFam" id="1.20.1110.10:FF:000163">
    <property type="match status" value="1"/>
</dbReference>
<dbReference type="FunFam" id="2.70.150.10:FF:000106">
    <property type="entry name" value="Sodium/potassium-transporting ATPase subunit alpha"/>
    <property type="match status" value="1"/>
</dbReference>
<dbReference type="FunFam" id="3.40.1110.10:FF:000001">
    <property type="entry name" value="Sodium/potassium-transporting ATPase subunit alpha"/>
    <property type="match status" value="1"/>
</dbReference>
<dbReference type="FunFam" id="3.40.50.1000:FF:000004">
    <property type="entry name" value="Sodium/potassium-transporting ATPase subunit alpha"/>
    <property type="match status" value="1"/>
</dbReference>
<dbReference type="FunFam" id="1.20.1110.10:FF:000095">
    <property type="entry name" value="Sodium/potassium-transporting ATPase subunit alpha-1"/>
    <property type="match status" value="2"/>
</dbReference>
<dbReference type="Gene3D" id="3.40.1110.10">
    <property type="entry name" value="Calcium-transporting ATPase, cytoplasmic domain N"/>
    <property type="match status" value="1"/>
</dbReference>
<dbReference type="Gene3D" id="2.70.150.10">
    <property type="entry name" value="Calcium-transporting ATPase, cytoplasmic transduction domain A"/>
    <property type="match status" value="1"/>
</dbReference>
<dbReference type="Gene3D" id="1.20.1110.10">
    <property type="entry name" value="Calcium-transporting ATPase, transmembrane domain"/>
    <property type="match status" value="1"/>
</dbReference>
<dbReference type="Gene3D" id="3.40.50.1000">
    <property type="entry name" value="HAD superfamily/HAD-like"/>
    <property type="match status" value="1"/>
</dbReference>
<dbReference type="InterPro" id="IPR006068">
    <property type="entry name" value="ATPase_P-typ_cation-transptr_C"/>
</dbReference>
<dbReference type="InterPro" id="IPR004014">
    <property type="entry name" value="ATPase_P-typ_cation-transptr_N"/>
</dbReference>
<dbReference type="InterPro" id="IPR023299">
    <property type="entry name" value="ATPase_P-typ_cyto_dom_N"/>
</dbReference>
<dbReference type="InterPro" id="IPR018303">
    <property type="entry name" value="ATPase_P-typ_P_site"/>
</dbReference>
<dbReference type="InterPro" id="IPR023298">
    <property type="entry name" value="ATPase_P-typ_TM_dom_sf"/>
</dbReference>
<dbReference type="InterPro" id="IPR008250">
    <property type="entry name" value="ATPase_P-typ_transduc_dom_A_sf"/>
</dbReference>
<dbReference type="InterPro" id="IPR050510">
    <property type="entry name" value="Cation_transp_ATPase_P-type"/>
</dbReference>
<dbReference type="InterPro" id="IPR036412">
    <property type="entry name" value="HAD-like_sf"/>
</dbReference>
<dbReference type="InterPro" id="IPR023214">
    <property type="entry name" value="HAD_sf"/>
</dbReference>
<dbReference type="InterPro" id="IPR005775">
    <property type="entry name" value="P-type_ATPase_IIC"/>
</dbReference>
<dbReference type="InterPro" id="IPR001757">
    <property type="entry name" value="P_typ_ATPase"/>
</dbReference>
<dbReference type="InterPro" id="IPR044492">
    <property type="entry name" value="P_typ_ATPase_HD_dom"/>
</dbReference>
<dbReference type="NCBIfam" id="TIGR01106">
    <property type="entry name" value="ATPase-IIC_X-K"/>
    <property type="match status" value="1"/>
</dbReference>
<dbReference type="NCBIfam" id="TIGR01494">
    <property type="entry name" value="ATPase_P-type"/>
    <property type="match status" value="2"/>
</dbReference>
<dbReference type="PANTHER" id="PTHR43294">
    <property type="entry name" value="SODIUM/POTASSIUM-TRANSPORTING ATPASE SUBUNIT ALPHA"/>
    <property type="match status" value="1"/>
</dbReference>
<dbReference type="PANTHER" id="PTHR43294:SF9">
    <property type="entry name" value="SODIUM_POTASSIUM-TRANSPORTING ATPASE SUBUNIT ALPHA-1"/>
    <property type="match status" value="1"/>
</dbReference>
<dbReference type="Pfam" id="PF13246">
    <property type="entry name" value="Cation_ATPase"/>
    <property type="match status" value="1"/>
</dbReference>
<dbReference type="Pfam" id="PF00689">
    <property type="entry name" value="Cation_ATPase_C"/>
    <property type="match status" value="1"/>
</dbReference>
<dbReference type="Pfam" id="PF00690">
    <property type="entry name" value="Cation_ATPase_N"/>
    <property type="match status" value="1"/>
</dbReference>
<dbReference type="Pfam" id="PF00122">
    <property type="entry name" value="E1-E2_ATPase"/>
    <property type="match status" value="1"/>
</dbReference>
<dbReference type="PRINTS" id="PR00119">
    <property type="entry name" value="CATATPASE"/>
</dbReference>
<dbReference type="PRINTS" id="PR00121">
    <property type="entry name" value="NAKATPASE"/>
</dbReference>
<dbReference type="SFLD" id="SFLDG00002">
    <property type="entry name" value="C1.7:_P-type_atpase_like"/>
    <property type="match status" value="1"/>
</dbReference>
<dbReference type="SFLD" id="SFLDF00027">
    <property type="entry name" value="p-type_atpase"/>
    <property type="match status" value="1"/>
</dbReference>
<dbReference type="SMART" id="SM00831">
    <property type="entry name" value="Cation_ATPase_N"/>
    <property type="match status" value="1"/>
</dbReference>
<dbReference type="SUPFAM" id="SSF81653">
    <property type="entry name" value="Calcium ATPase, transduction domain A"/>
    <property type="match status" value="1"/>
</dbReference>
<dbReference type="SUPFAM" id="SSF81665">
    <property type="entry name" value="Calcium ATPase, transmembrane domain M"/>
    <property type="match status" value="1"/>
</dbReference>
<dbReference type="SUPFAM" id="SSF56784">
    <property type="entry name" value="HAD-like"/>
    <property type="match status" value="1"/>
</dbReference>
<dbReference type="SUPFAM" id="SSF81660">
    <property type="entry name" value="Metal cation-transporting ATPase, ATP-binding domain N"/>
    <property type="match status" value="1"/>
</dbReference>
<dbReference type="PROSITE" id="PS00154">
    <property type="entry name" value="ATPASE_E1_E2"/>
    <property type="match status" value="1"/>
</dbReference>
<accession>Q08DA1</accession>
<name>AT1A1_BOVIN</name>